<dbReference type="EMBL" id="AL445063">
    <property type="protein sequence ID" value="CAC11239.1"/>
    <property type="molecule type" value="Genomic_DNA"/>
</dbReference>
<dbReference type="RefSeq" id="WP_010900518.1">
    <property type="nucleotide sequence ID" value="NC_002578.1"/>
</dbReference>
<dbReference type="SMR" id="Q9HLY2"/>
<dbReference type="FunCoup" id="Q9HLY2">
    <property type="interactions" value="158"/>
</dbReference>
<dbReference type="STRING" id="273075.gene:9571306"/>
<dbReference type="PaxDb" id="273075-Ta0091"/>
<dbReference type="EnsemblBacteria" id="CAC11239">
    <property type="protein sequence ID" value="CAC11239"/>
    <property type="gene ID" value="CAC11239"/>
</dbReference>
<dbReference type="KEGG" id="tac:Ta0091"/>
<dbReference type="eggNOG" id="arCOG04255">
    <property type="taxonomic scope" value="Archaea"/>
</dbReference>
<dbReference type="HOGENOM" id="CLU_115574_0_1_2"/>
<dbReference type="InParanoid" id="Q9HLY2"/>
<dbReference type="OrthoDB" id="45154at2157"/>
<dbReference type="Proteomes" id="UP000001024">
    <property type="component" value="Chromosome"/>
</dbReference>
<dbReference type="GO" id="GO:0015935">
    <property type="term" value="C:small ribosomal subunit"/>
    <property type="evidence" value="ECO:0007669"/>
    <property type="project" value="InterPro"/>
</dbReference>
<dbReference type="GO" id="GO:0019843">
    <property type="term" value="F:rRNA binding"/>
    <property type="evidence" value="ECO:0007669"/>
    <property type="project" value="UniProtKB-UniRule"/>
</dbReference>
<dbReference type="GO" id="GO:0003735">
    <property type="term" value="F:structural constituent of ribosome"/>
    <property type="evidence" value="ECO:0007669"/>
    <property type="project" value="InterPro"/>
</dbReference>
<dbReference type="GO" id="GO:0006412">
    <property type="term" value="P:translation"/>
    <property type="evidence" value="ECO:0007669"/>
    <property type="project" value="UniProtKB-UniRule"/>
</dbReference>
<dbReference type="CDD" id="cd03367">
    <property type="entry name" value="Ribosomal_S23"/>
    <property type="match status" value="1"/>
</dbReference>
<dbReference type="FunFam" id="2.40.50.140:FF:000007">
    <property type="entry name" value="40S ribosomal protein S23"/>
    <property type="match status" value="1"/>
</dbReference>
<dbReference type="Gene3D" id="2.40.50.140">
    <property type="entry name" value="Nucleic acid-binding proteins"/>
    <property type="match status" value="1"/>
</dbReference>
<dbReference type="HAMAP" id="MF_00403_A">
    <property type="entry name" value="Ribosomal_uS12_A"/>
    <property type="match status" value="1"/>
</dbReference>
<dbReference type="InterPro" id="IPR012340">
    <property type="entry name" value="NA-bd_OB-fold"/>
</dbReference>
<dbReference type="InterPro" id="IPR006032">
    <property type="entry name" value="Ribosomal_uS12"/>
</dbReference>
<dbReference type="InterPro" id="IPR022863">
    <property type="entry name" value="Ribosomal_uS12_arc"/>
</dbReference>
<dbReference type="InterPro" id="IPR005680">
    <property type="entry name" value="Ribosomal_uS12_euk/arc"/>
</dbReference>
<dbReference type="NCBIfam" id="NF003254">
    <property type="entry name" value="PRK04211.1"/>
    <property type="match status" value="1"/>
</dbReference>
<dbReference type="NCBIfam" id="TIGR00982">
    <property type="entry name" value="uS12_E_A"/>
    <property type="match status" value="1"/>
</dbReference>
<dbReference type="PANTHER" id="PTHR11652">
    <property type="entry name" value="30S RIBOSOMAL PROTEIN S12 FAMILY MEMBER"/>
    <property type="match status" value="1"/>
</dbReference>
<dbReference type="Pfam" id="PF00164">
    <property type="entry name" value="Ribosom_S12_S23"/>
    <property type="match status" value="1"/>
</dbReference>
<dbReference type="PIRSF" id="PIRSF002133">
    <property type="entry name" value="Ribosomal_S12/S23"/>
    <property type="match status" value="1"/>
</dbReference>
<dbReference type="SUPFAM" id="SSF50249">
    <property type="entry name" value="Nucleic acid-binding proteins"/>
    <property type="match status" value="1"/>
</dbReference>
<dbReference type="PROSITE" id="PS00055">
    <property type="entry name" value="RIBOSOMAL_S12"/>
    <property type="match status" value="1"/>
</dbReference>
<evidence type="ECO:0000255" key="1">
    <source>
        <dbReference type="HAMAP-Rule" id="MF_00403"/>
    </source>
</evidence>
<evidence type="ECO:0000305" key="2"/>
<keyword id="KW-1185">Reference proteome</keyword>
<keyword id="KW-0687">Ribonucleoprotein</keyword>
<keyword id="KW-0689">Ribosomal protein</keyword>
<keyword id="KW-0694">RNA-binding</keyword>
<keyword id="KW-0699">rRNA-binding</keyword>
<sequence length="142" mass="15751">MGNGINAGRKLLENRKKFRWSDRDYKRRVLQLKRKSDPLEGAPQAKGIAIEKVGIEAKQPNSAIRKCVKVQLIKNGRQITAFAVGDGAINYIDEHDEVTVEGIGGRMGRSKGDIPGVRYKVVAVNGISLKELVKGRKEKTVR</sequence>
<proteinExistence type="inferred from homology"/>
<reference key="1">
    <citation type="journal article" date="2000" name="Nature">
        <title>The genome sequence of the thermoacidophilic scavenger Thermoplasma acidophilum.</title>
        <authorList>
            <person name="Ruepp A."/>
            <person name="Graml W."/>
            <person name="Santos-Martinez M.-L."/>
            <person name="Koretke K.K."/>
            <person name="Volker C."/>
            <person name="Mewes H.-W."/>
            <person name="Frishman D."/>
            <person name="Stocker S."/>
            <person name="Lupas A.N."/>
            <person name="Baumeister W."/>
        </authorList>
    </citation>
    <scope>NUCLEOTIDE SEQUENCE [LARGE SCALE GENOMIC DNA]</scope>
    <source>
        <strain>ATCC 25905 / DSM 1728 / JCM 9062 / NBRC 15155 / AMRC-C165</strain>
    </source>
</reference>
<organism>
    <name type="scientific">Thermoplasma acidophilum (strain ATCC 25905 / DSM 1728 / JCM 9062 / NBRC 15155 / AMRC-C165)</name>
    <dbReference type="NCBI Taxonomy" id="273075"/>
    <lineage>
        <taxon>Archaea</taxon>
        <taxon>Methanobacteriati</taxon>
        <taxon>Thermoplasmatota</taxon>
        <taxon>Thermoplasmata</taxon>
        <taxon>Thermoplasmatales</taxon>
        <taxon>Thermoplasmataceae</taxon>
        <taxon>Thermoplasma</taxon>
    </lineage>
</organism>
<comment type="function">
    <text evidence="1">With S4 and S5 plays an important role in translational accuracy. Located at the interface of the 30S and 50S subunits.</text>
</comment>
<comment type="subunit">
    <text evidence="1">Part of the 30S ribosomal subunit.</text>
</comment>
<comment type="similarity">
    <text evidence="1">Belongs to the universal ribosomal protein uS12 family.</text>
</comment>
<gene>
    <name evidence="1" type="primary">rps12</name>
    <name type="ordered locus">Ta0091</name>
</gene>
<protein>
    <recommendedName>
        <fullName evidence="1">Small ribosomal subunit protein uS12</fullName>
    </recommendedName>
    <alternativeName>
        <fullName evidence="2">30S ribosomal protein S12</fullName>
    </alternativeName>
</protein>
<accession>Q9HLY2</accession>
<feature type="chain" id="PRO_0000146384" description="Small ribosomal subunit protein uS12">
    <location>
        <begin position="1"/>
        <end position="142"/>
    </location>
</feature>
<name>RS12_THEAC</name>